<protein>
    <recommendedName>
        <fullName evidence="1">Aspartyl/glutamyl-tRNA(Asn/Gln) amidotransferase subunit C</fullName>
        <shortName evidence="1">Asp/Glu-ADT subunit C</shortName>
        <ecNumber evidence="1">6.3.5.-</ecNumber>
    </recommendedName>
</protein>
<name>GATC_HYDS0</name>
<accession>B4U5L8</accession>
<organism>
    <name type="scientific">Hydrogenobaculum sp. (strain Y04AAS1)</name>
    <dbReference type="NCBI Taxonomy" id="380749"/>
    <lineage>
        <taxon>Bacteria</taxon>
        <taxon>Pseudomonadati</taxon>
        <taxon>Aquificota</taxon>
        <taxon>Aquificia</taxon>
        <taxon>Aquificales</taxon>
        <taxon>Aquificaceae</taxon>
        <taxon>Hydrogenobaculum</taxon>
    </lineage>
</organism>
<gene>
    <name evidence="1" type="primary">gatC</name>
    <name type="ordered locus">HY04AAS1_1373</name>
</gene>
<comment type="function">
    <text evidence="1">Allows the formation of correctly charged Asn-tRNA(Asn) or Gln-tRNA(Gln) through the transamidation of misacylated Asp-tRNA(Asn) or Glu-tRNA(Gln) in organisms which lack either or both of asparaginyl-tRNA or glutaminyl-tRNA synthetases. The reaction takes place in the presence of glutamine and ATP through an activated phospho-Asp-tRNA(Asn) or phospho-Glu-tRNA(Gln).</text>
</comment>
<comment type="catalytic activity">
    <reaction evidence="1">
        <text>L-glutamyl-tRNA(Gln) + L-glutamine + ATP + H2O = L-glutaminyl-tRNA(Gln) + L-glutamate + ADP + phosphate + H(+)</text>
        <dbReference type="Rhea" id="RHEA:17521"/>
        <dbReference type="Rhea" id="RHEA-COMP:9681"/>
        <dbReference type="Rhea" id="RHEA-COMP:9684"/>
        <dbReference type="ChEBI" id="CHEBI:15377"/>
        <dbReference type="ChEBI" id="CHEBI:15378"/>
        <dbReference type="ChEBI" id="CHEBI:29985"/>
        <dbReference type="ChEBI" id="CHEBI:30616"/>
        <dbReference type="ChEBI" id="CHEBI:43474"/>
        <dbReference type="ChEBI" id="CHEBI:58359"/>
        <dbReference type="ChEBI" id="CHEBI:78520"/>
        <dbReference type="ChEBI" id="CHEBI:78521"/>
        <dbReference type="ChEBI" id="CHEBI:456216"/>
    </reaction>
</comment>
<comment type="catalytic activity">
    <reaction evidence="1">
        <text>L-aspartyl-tRNA(Asn) + L-glutamine + ATP + H2O = L-asparaginyl-tRNA(Asn) + L-glutamate + ADP + phosphate + 2 H(+)</text>
        <dbReference type="Rhea" id="RHEA:14513"/>
        <dbReference type="Rhea" id="RHEA-COMP:9674"/>
        <dbReference type="Rhea" id="RHEA-COMP:9677"/>
        <dbReference type="ChEBI" id="CHEBI:15377"/>
        <dbReference type="ChEBI" id="CHEBI:15378"/>
        <dbReference type="ChEBI" id="CHEBI:29985"/>
        <dbReference type="ChEBI" id="CHEBI:30616"/>
        <dbReference type="ChEBI" id="CHEBI:43474"/>
        <dbReference type="ChEBI" id="CHEBI:58359"/>
        <dbReference type="ChEBI" id="CHEBI:78515"/>
        <dbReference type="ChEBI" id="CHEBI:78516"/>
        <dbReference type="ChEBI" id="CHEBI:456216"/>
    </reaction>
</comment>
<comment type="subunit">
    <text evidence="1">Heterotrimer of A, B and C subunits.</text>
</comment>
<comment type="similarity">
    <text evidence="1">Belongs to the GatC family.</text>
</comment>
<proteinExistence type="inferred from homology"/>
<feature type="chain" id="PRO_1000095289" description="Aspartyl/glutamyl-tRNA(Asn/Gln) amidotransferase subunit C">
    <location>
        <begin position="1"/>
        <end position="94"/>
    </location>
</feature>
<sequence>MSISKEEVIKIAKLSRLELKEDEVEFFSAQIKNILEFVNKLNEVKAELLEEEYSDSTPLRKDEPETSLEVDKVLLNAPAKRLNMFEVPKIVDAN</sequence>
<evidence type="ECO:0000255" key="1">
    <source>
        <dbReference type="HAMAP-Rule" id="MF_00122"/>
    </source>
</evidence>
<dbReference type="EC" id="6.3.5.-" evidence="1"/>
<dbReference type="EMBL" id="CP001130">
    <property type="protein sequence ID" value="ACG58058.1"/>
    <property type="molecule type" value="Genomic_DNA"/>
</dbReference>
<dbReference type="RefSeq" id="WP_012514414.1">
    <property type="nucleotide sequence ID" value="NC_011126.1"/>
</dbReference>
<dbReference type="SMR" id="B4U5L8"/>
<dbReference type="STRING" id="380749.HY04AAS1_1373"/>
<dbReference type="KEGG" id="hya:HY04AAS1_1373"/>
<dbReference type="eggNOG" id="COG0721">
    <property type="taxonomic scope" value="Bacteria"/>
</dbReference>
<dbReference type="HOGENOM" id="CLU_105899_2_0_0"/>
<dbReference type="OrthoDB" id="9813938at2"/>
<dbReference type="GO" id="GO:0050566">
    <property type="term" value="F:asparaginyl-tRNA synthase (glutamine-hydrolyzing) activity"/>
    <property type="evidence" value="ECO:0007669"/>
    <property type="project" value="RHEA"/>
</dbReference>
<dbReference type="GO" id="GO:0005524">
    <property type="term" value="F:ATP binding"/>
    <property type="evidence" value="ECO:0007669"/>
    <property type="project" value="UniProtKB-KW"/>
</dbReference>
<dbReference type="GO" id="GO:0050567">
    <property type="term" value="F:glutaminyl-tRNA synthase (glutamine-hydrolyzing) activity"/>
    <property type="evidence" value="ECO:0007669"/>
    <property type="project" value="UniProtKB-UniRule"/>
</dbReference>
<dbReference type="GO" id="GO:0070681">
    <property type="term" value="P:glutaminyl-tRNAGln biosynthesis via transamidation"/>
    <property type="evidence" value="ECO:0007669"/>
    <property type="project" value="TreeGrafter"/>
</dbReference>
<dbReference type="GO" id="GO:0006450">
    <property type="term" value="P:regulation of translational fidelity"/>
    <property type="evidence" value="ECO:0007669"/>
    <property type="project" value="InterPro"/>
</dbReference>
<dbReference type="GO" id="GO:0006412">
    <property type="term" value="P:translation"/>
    <property type="evidence" value="ECO:0007669"/>
    <property type="project" value="UniProtKB-UniRule"/>
</dbReference>
<dbReference type="Gene3D" id="1.10.20.60">
    <property type="entry name" value="Glu-tRNAGln amidotransferase C subunit, N-terminal domain"/>
    <property type="match status" value="1"/>
</dbReference>
<dbReference type="HAMAP" id="MF_00122">
    <property type="entry name" value="GatC"/>
    <property type="match status" value="1"/>
</dbReference>
<dbReference type="InterPro" id="IPR036113">
    <property type="entry name" value="Asp/Glu-ADT_sf_sub_c"/>
</dbReference>
<dbReference type="InterPro" id="IPR003837">
    <property type="entry name" value="GatC"/>
</dbReference>
<dbReference type="NCBIfam" id="TIGR00135">
    <property type="entry name" value="gatC"/>
    <property type="match status" value="1"/>
</dbReference>
<dbReference type="PANTHER" id="PTHR15004">
    <property type="entry name" value="GLUTAMYL-TRNA(GLN) AMIDOTRANSFERASE SUBUNIT C, MITOCHONDRIAL"/>
    <property type="match status" value="1"/>
</dbReference>
<dbReference type="PANTHER" id="PTHR15004:SF0">
    <property type="entry name" value="GLUTAMYL-TRNA(GLN) AMIDOTRANSFERASE SUBUNIT C, MITOCHONDRIAL"/>
    <property type="match status" value="1"/>
</dbReference>
<dbReference type="Pfam" id="PF02686">
    <property type="entry name" value="GatC"/>
    <property type="match status" value="1"/>
</dbReference>
<dbReference type="SUPFAM" id="SSF141000">
    <property type="entry name" value="Glu-tRNAGln amidotransferase C subunit"/>
    <property type="match status" value="1"/>
</dbReference>
<keyword id="KW-0067">ATP-binding</keyword>
<keyword id="KW-0436">Ligase</keyword>
<keyword id="KW-0547">Nucleotide-binding</keyword>
<keyword id="KW-0648">Protein biosynthesis</keyword>
<reference key="1">
    <citation type="journal article" date="2009" name="J. Bacteriol.">
        <title>Complete and draft genome sequences of six members of the Aquificales.</title>
        <authorList>
            <person name="Reysenbach A.-L."/>
            <person name="Hamamura N."/>
            <person name="Podar M."/>
            <person name="Griffiths E."/>
            <person name="Ferreira S."/>
            <person name="Hochstein R."/>
            <person name="Heidelberg J."/>
            <person name="Johnson J."/>
            <person name="Mead D."/>
            <person name="Pohorille A."/>
            <person name="Sarmiento M."/>
            <person name="Schweighofer K."/>
            <person name="Seshadri R."/>
            <person name="Voytek M.A."/>
        </authorList>
    </citation>
    <scope>NUCLEOTIDE SEQUENCE [LARGE SCALE GENOMIC DNA]</scope>
    <source>
        <strain>Y04AAS1</strain>
    </source>
</reference>